<gene>
    <name evidence="1" type="primary">tilS</name>
    <name type="ordered locus">spr0010</name>
</gene>
<keyword id="KW-0067">ATP-binding</keyword>
<keyword id="KW-0963">Cytoplasm</keyword>
<keyword id="KW-0436">Ligase</keyword>
<keyword id="KW-0547">Nucleotide-binding</keyword>
<keyword id="KW-1185">Reference proteome</keyword>
<keyword id="KW-0819">tRNA processing</keyword>
<protein>
    <recommendedName>
        <fullName evidence="1">tRNA(Ile)-lysidine synthase</fullName>
        <ecNumber evidence="1">6.3.4.19</ecNumber>
    </recommendedName>
    <alternativeName>
        <fullName evidence="1">tRNA(Ile)-2-lysyl-cytidine synthase</fullName>
    </alternativeName>
    <alternativeName>
        <fullName evidence="1">tRNA(Ile)-lysidine synthetase</fullName>
    </alternativeName>
</protein>
<accession>Q8DRP9</accession>
<dbReference type="EC" id="6.3.4.19" evidence="1"/>
<dbReference type="EMBL" id="AE007317">
    <property type="protein sequence ID" value="AAK98814.1"/>
    <property type="molecule type" value="Genomic_DNA"/>
</dbReference>
<dbReference type="PIR" id="B97873">
    <property type="entry name" value="B97873"/>
</dbReference>
<dbReference type="RefSeq" id="NP_357604.1">
    <property type="nucleotide sequence ID" value="NC_003098.1"/>
</dbReference>
<dbReference type="RefSeq" id="WP_001208977.1">
    <property type="nucleotide sequence ID" value="NC_003098.1"/>
</dbReference>
<dbReference type="SMR" id="Q8DRP9"/>
<dbReference type="STRING" id="171101.spr0010"/>
<dbReference type="KEGG" id="spr:spr0010"/>
<dbReference type="PATRIC" id="fig|171101.6.peg.11"/>
<dbReference type="eggNOG" id="COG0037">
    <property type="taxonomic scope" value="Bacteria"/>
</dbReference>
<dbReference type="HOGENOM" id="CLU_018869_0_2_9"/>
<dbReference type="Proteomes" id="UP000000586">
    <property type="component" value="Chromosome"/>
</dbReference>
<dbReference type="GO" id="GO:0005737">
    <property type="term" value="C:cytoplasm"/>
    <property type="evidence" value="ECO:0007669"/>
    <property type="project" value="UniProtKB-SubCell"/>
</dbReference>
<dbReference type="GO" id="GO:0005524">
    <property type="term" value="F:ATP binding"/>
    <property type="evidence" value="ECO:0007669"/>
    <property type="project" value="UniProtKB-UniRule"/>
</dbReference>
<dbReference type="GO" id="GO:0032267">
    <property type="term" value="F:tRNA(Ile)-lysidine synthase activity"/>
    <property type="evidence" value="ECO:0007669"/>
    <property type="project" value="UniProtKB-EC"/>
</dbReference>
<dbReference type="GO" id="GO:0006400">
    <property type="term" value="P:tRNA modification"/>
    <property type="evidence" value="ECO:0007669"/>
    <property type="project" value="UniProtKB-UniRule"/>
</dbReference>
<dbReference type="CDD" id="cd01992">
    <property type="entry name" value="TilS_N"/>
    <property type="match status" value="1"/>
</dbReference>
<dbReference type="Gene3D" id="3.40.50.620">
    <property type="entry name" value="HUPs"/>
    <property type="match status" value="1"/>
</dbReference>
<dbReference type="HAMAP" id="MF_01161">
    <property type="entry name" value="tRNA_Ile_lys_synt"/>
    <property type="match status" value="1"/>
</dbReference>
<dbReference type="InterPro" id="IPR012796">
    <property type="entry name" value="Lysidine-tRNA-synth_C"/>
</dbReference>
<dbReference type="InterPro" id="IPR014729">
    <property type="entry name" value="Rossmann-like_a/b/a_fold"/>
</dbReference>
<dbReference type="InterPro" id="IPR011063">
    <property type="entry name" value="TilS/TtcA_N"/>
</dbReference>
<dbReference type="InterPro" id="IPR012094">
    <property type="entry name" value="tRNA_Ile_lys_synt"/>
</dbReference>
<dbReference type="InterPro" id="IPR012795">
    <property type="entry name" value="tRNA_Ile_lys_synt_N"/>
</dbReference>
<dbReference type="NCBIfam" id="TIGR02433">
    <property type="entry name" value="lysidine_TilS_C"/>
    <property type="match status" value="1"/>
</dbReference>
<dbReference type="NCBIfam" id="TIGR02432">
    <property type="entry name" value="lysidine_TilS_N"/>
    <property type="match status" value="1"/>
</dbReference>
<dbReference type="PANTHER" id="PTHR43033">
    <property type="entry name" value="TRNA(ILE)-LYSIDINE SYNTHASE-RELATED"/>
    <property type="match status" value="1"/>
</dbReference>
<dbReference type="PANTHER" id="PTHR43033:SF1">
    <property type="entry name" value="TRNA(ILE)-LYSIDINE SYNTHASE-RELATED"/>
    <property type="match status" value="1"/>
</dbReference>
<dbReference type="Pfam" id="PF01171">
    <property type="entry name" value="ATP_bind_3"/>
    <property type="match status" value="1"/>
</dbReference>
<dbReference type="Pfam" id="PF11734">
    <property type="entry name" value="TilS_C"/>
    <property type="match status" value="1"/>
</dbReference>
<dbReference type="SMART" id="SM00977">
    <property type="entry name" value="TilS_C"/>
    <property type="match status" value="1"/>
</dbReference>
<dbReference type="SUPFAM" id="SSF52402">
    <property type="entry name" value="Adenine nucleotide alpha hydrolases-like"/>
    <property type="match status" value="1"/>
</dbReference>
<dbReference type="SUPFAM" id="SSF56037">
    <property type="entry name" value="PheT/TilS domain"/>
    <property type="match status" value="1"/>
</dbReference>
<reference key="1">
    <citation type="journal article" date="2001" name="J. Bacteriol.">
        <title>Genome of the bacterium Streptococcus pneumoniae strain R6.</title>
        <authorList>
            <person name="Hoskins J."/>
            <person name="Alborn W.E. Jr."/>
            <person name="Arnold J."/>
            <person name="Blaszczak L.C."/>
            <person name="Burgett S."/>
            <person name="DeHoff B.S."/>
            <person name="Estrem S.T."/>
            <person name="Fritz L."/>
            <person name="Fu D.-J."/>
            <person name="Fuller W."/>
            <person name="Geringer C."/>
            <person name="Gilmour R."/>
            <person name="Glass J.S."/>
            <person name="Khoja H."/>
            <person name="Kraft A.R."/>
            <person name="Lagace R.E."/>
            <person name="LeBlanc D.J."/>
            <person name="Lee L.N."/>
            <person name="Lefkowitz E.J."/>
            <person name="Lu J."/>
            <person name="Matsushima P."/>
            <person name="McAhren S.M."/>
            <person name="McHenney M."/>
            <person name="McLeaster K."/>
            <person name="Mundy C.W."/>
            <person name="Nicas T.I."/>
            <person name="Norris F.H."/>
            <person name="O'Gara M."/>
            <person name="Peery R.B."/>
            <person name="Robertson G.T."/>
            <person name="Rockey P."/>
            <person name="Sun P.-M."/>
            <person name="Winkler M.E."/>
            <person name="Yang Y."/>
            <person name="Young-Bellido M."/>
            <person name="Zhao G."/>
            <person name="Zook C.A."/>
            <person name="Baltz R.H."/>
            <person name="Jaskunas S.R."/>
            <person name="Rosteck P.R. Jr."/>
            <person name="Skatrud P.L."/>
            <person name="Glass J.I."/>
        </authorList>
    </citation>
    <scope>NUCLEOTIDE SEQUENCE [LARGE SCALE GENOMIC DNA]</scope>
    <source>
        <strain>ATCC BAA-255 / R6</strain>
    </source>
</reference>
<feature type="chain" id="PRO_0000181779" description="tRNA(Ile)-lysidine synthase">
    <location>
        <begin position="1"/>
        <end position="425"/>
    </location>
</feature>
<feature type="binding site" evidence="1">
    <location>
        <begin position="27"/>
        <end position="32"/>
    </location>
    <ligand>
        <name>ATP</name>
        <dbReference type="ChEBI" id="CHEBI:30616"/>
    </ligand>
</feature>
<name>TILS_STRR6</name>
<sequence>MREPDFLNHFLKKGYFKKHAKAVLALSGGLDSMFLFKVLSTYQKELEIELILAHVNHKQRIESDWEEKELRKLAAEAELPIYISNFSGEFSEARARNFRYDFFQEVMKKTGATALVTAHHADDQVETIFMRLIRGTRLRYLSGIKEKQVVGEIEIIRPFLHFQKKDFPSIFHFEDTSNQENHYFRNRIRNSYLPELEKENPRFRDAILGIGNEILDYDLAIAELSNNINVEDLQQLFSYSESTQRVLLQTYLNRFPDLNLTKAQFAEVQQILKFKSQYRHPIKNGYELIKEYQQFQICKISPQADEKEDELVLHYQNQVAYQGYLFSFGLPLEGELIQQIPVSRETSIHIRHRKTGDVLIKNGHRKKLRRLFIDLKIPMEKRNSALIIEQFGEIVSILGIATNNLSKKTKNDIMNTVLYIEKIDR</sequence>
<organism>
    <name type="scientific">Streptococcus pneumoniae (strain ATCC BAA-255 / R6)</name>
    <dbReference type="NCBI Taxonomy" id="171101"/>
    <lineage>
        <taxon>Bacteria</taxon>
        <taxon>Bacillati</taxon>
        <taxon>Bacillota</taxon>
        <taxon>Bacilli</taxon>
        <taxon>Lactobacillales</taxon>
        <taxon>Streptococcaceae</taxon>
        <taxon>Streptococcus</taxon>
    </lineage>
</organism>
<evidence type="ECO:0000255" key="1">
    <source>
        <dbReference type="HAMAP-Rule" id="MF_01161"/>
    </source>
</evidence>
<proteinExistence type="inferred from homology"/>
<comment type="function">
    <text evidence="1">Ligates lysine onto the cytidine present at position 34 of the AUA codon-specific tRNA(Ile) that contains the anticodon CAU, in an ATP-dependent manner. Cytidine is converted to lysidine, thus changing the amino acid specificity of the tRNA from methionine to isoleucine.</text>
</comment>
<comment type="catalytic activity">
    <reaction evidence="1">
        <text>cytidine(34) in tRNA(Ile2) + L-lysine + ATP = lysidine(34) in tRNA(Ile2) + AMP + diphosphate + H(+)</text>
        <dbReference type="Rhea" id="RHEA:43744"/>
        <dbReference type="Rhea" id="RHEA-COMP:10625"/>
        <dbReference type="Rhea" id="RHEA-COMP:10670"/>
        <dbReference type="ChEBI" id="CHEBI:15378"/>
        <dbReference type="ChEBI" id="CHEBI:30616"/>
        <dbReference type="ChEBI" id="CHEBI:32551"/>
        <dbReference type="ChEBI" id="CHEBI:33019"/>
        <dbReference type="ChEBI" id="CHEBI:82748"/>
        <dbReference type="ChEBI" id="CHEBI:83665"/>
        <dbReference type="ChEBI" id="CHEBI:456215"/>
        <dbReference type="EC" id="6.3.4.19"/>
    </reaction>
</comment>
<comment type="subcellular location">
    <subcellularLocation>
        <location evidence="1">Cytoplasm</location>
    </subcellularLocation>
</comment>
<comment type="domain">
    <text>The N-terminal region contains the highly conserved SGGXDS motif, predicted to be a P-loop motif involved in ATP binding.</text>
</comment>
<comment type="similarity">
    <text evidence="1">Belongs to the tRNA(Ile)-lysidine synthase family.</text>
</comment>